<keyword id="KW-1185">Reference proteome</keyword>
<comment type="similarity">
    <text evidence="1">Belongs to the hssA/B family.</text>
</comment>
<reference key="1">
    <citation type="journal article" date="2002" name="Nature">
        <title>Sequence and analysis of chromosome 2 of Dictyostelium discoideum.</title>
        <authorList>
            <person name="Gloeckner G."/>
            <person name="Eichinger L."/>
            <person name="Szafranski K."/>
            <person name="Pachebat J.A."/>
            <person name="Bankier A.T."/>
            <person name="Dear P.H."/>
            <person name="Lehmann R."/>
            <person name="Baumgart C."/>
            <person name="Parra G."/>
            <person name="Abril J.F."/>
            <person name="Guigo R."/>
            <person name="Kumpf K."/>
            <person name="Tunggal B."/>
            <person name="Cox E.C."/>
            <person name="Quail M.A."/>
            <person name="Platzer M."/>
            <person name="Rosenthal A."/>
            <person name="Noegel A.A."/>
        </authorList>
    </citation>
    <scope>NUCLEOTIDE SEQUENCE [LARGE SCALE GENOMIC DNA]</scope>
    <source>
        <strain>AX4</strain>
    </source>
</reference>
<reference key="2">
    <citation type="journal article" date="2005" name="Nature">
        <title>The genome of the social amoeba Dictyostelium discoideum.</title>
        <authorList>
            <person name="Eichinger L."/>
            <person name="Pachebat J.A."/>
            <person name="Gloeckner G."/>
            <person name="Rajandream M.A."/>
            <person name="Sucgang R."/>
            <person name="Berriman M."/>
            <person name="Song J."/>
            <person name="Olsen R."/>
            <person name="Szafranski K."/>
            <person name="Xu Q."/>
            <person name="Tunggal B."/>
            <person name="Kummerfeld S."/>
            <person name="Madera M."/>
            <person name="Konfortov B.A."/>
            <person name="Rivero F."/>
            <person name="Bankier A.T."/>
            <person name="Lehmann R."/>
            <person name="Hamlin N."/>
            <person name="Davies R."/>
            <person name="Gaudet P."/>
            <person name="Fey P."/>
            <person name="Pilcher K."/>
            <person name="Chen G."/>
            <person name="Saunders D."/>
            <person name="Sodergren E.J."/>
            <person name="Davis P."/>
            <person name="Kerhornou A."/>
            <person name="Nie X."/>
            <person name="Hall N."/>
            <person name="Anjard C."/>
            <person name="Hemphill L."/>
            <person name="Bason N."/>
            <person name="Farbrother P."/>
            <person name="Desany B."/>
            <person name="Just E."/>
            <person name="Morio T."/>
            <person name="Rost R."/>
            <person name="Churcher C.M."/>
            <person name="Cooper J."/>
            <person name="Haydock S."/>
            <person name="van Driessche N."/>
            <person name="Cronin A."/>
            <person name="Goodhead I."/>
            <person name="Muzny D.M."/>
            <person name="Mourier T."/>
            <person name="Pain A."/>
            <person name="Lu M."/>
            <person name="Harper D."/>
            <person name="Lindsay R."/>
            <person name="Hauser H."/>
            <person name="James K.D."/>
            <person name="Quiles M."/>
            <person name="Madan Babu M."/>
            <person name="Saito T."/>
            <person name="Buchrieser C."/>
            <person name="Wardroper A."/>
            <person name="Felder M."/>
            <person name="Thangavelu M."/>
            <person name="Johnson D."/>
            <person name="Knights A."/>
            <person name="Loulseged H."/>
            <person name="Mungall K.L."/>
            <person name="Oliver K."/>
            <person name="Price C."/>
            <person name="Quail M.A."/>
            <person name="Urushihara H."/>
            <person name="Hernandez J."/>
            <person name="Rabbinowitsch E."/>
            <person name="Steffen D."/>
            <person name="Sanders M."/>
            <person name="Ma J."/>
            <person name="Kohara Y."/>
            <person name="Sharp S."/>
            <person name="Simmonds M.N."/>
            <person name="Spiegler S."/>
            <person name="Tivey A."/>
            <person name="Sugano S."/>
            <person name="White B."/>
            <person name="Walker D."/>
            <person name="Woodward J.R."/>
            <person name="Winckler T."/>
            <person name="Tanaka Y."/>
            <person name="Shaulsky G."/>
            <person name="Schleicher M."/>
            <person name="Weinstock G.M."/>
            <person name="Rosenthal A."/>
            <person name="Cox E.C."/>
            <person name="Chisholm R.L."/>
            <person name="Gibbs R.A."/>
            <person name="Loomis W.F."/>
            <person name="Platzer M."/>
            <person name="Kay R.R."/>
            <person name="Williams J.G."/>
            <person name="Dear P.H."/>
            <person name="Noegel A.A."/>
            <person name="Barrell B.G."/>
            <person name="Kuspa A."/>
        </authorList>
    </citation>
    <scope>NUCLEOTIDE SEQUENCE [LARGE SCALE GENOMIC DNA]</scope>
    <source>
        <strain>AX4</strain>
    </source>
</reference>
<protein>
    <recommendedName>
        <fullName>HssA/B-like protein 10</fullName>
    </recommendedName>
</protein>
<name>HSL10_DICDI</name>
<sequence length="89" mass="8462">MTLLASISSIGNVKSISKSNNFSSLSNSSLQSSNSIQCGGCGGGSPLIGTVGNLVGGVLVGTGIIVGTVIGTVNGVVGGLLNGPNCGCH</sequence>
<dbReference type="EMBL" id="AAFI02000006">
    <property type="protein sequence ID" value="EAL71546.1"/>
    <property type="molecule type" value="Genomic_DNA"/>
</dbReference>
<dbReference type="RefSeq" id="XP_645500.1">
    <property type="nucleotide sequence ID" value="XM_640408.1"/>
</dbReference>
<dbReference type="FunCoup" id="Q86HG3">
    <property type="interactions" value="243"/>
</dbReference>
<dbReference type="CAZy" id="GH15">
    <property type="family name" value="Glycoside Hydrolase Family 15"/>
</dbReference>
<dbReference type="PaxDb" id="44689-DDB0238816"/>
<dbReference type="EnsemblProtists" id="EAL71546">
    <property type="protein sequence ID" value="EAL71546"/>
    <property type="gene ID" value="DDB_G0271712"/>
</dbReference>
<dbReference type="GeneID" id="8618129"/>
<dbReference type="KEGG" id="ddi:DDB_G0271712"/>
<dbReference type="dictyBase" id="DDB_G0271712">
    <property type="gene designation" value="sigN6"/>
</dbReference>
<dbReference type="eggNOG" id="ENOG502RIQ1">
    <property type="taxonomic scope" value="Eukaryota"/>
</dbReference>
<dbReference type="HOGENOM" id="CLU_190274_0_0_1"/>
<dbReference type="InParanoid" id="Q86HG3"/>
<dbReference type="PRO" id="PR:Q86HG3"/>
<dbReference type="Proteomes" id="UP000002195">
    <property type="component" value="Chromosome 2"/>
</dbReference>
<dbReference type="GO" id="GO:0030587">
    <property type="term" value="P:sorocarp development"/>
    <property type="evidence" value="ECO:0000318"/>
    <property type="project" value="GO_Central"/>
</dbReference>
<dbReference type="InterPro" id="IPR008455">
    <property type="entry name" value="HssA/B-related"/>
</dbReference>
<dbReference type="PANTHER" id="PTHR31857">
    <property type="entry name" value="HSSA/B-LIKE PROTEIN 17-RELATED"/>
    <property type="match status" value="1"/>
</dbReference>
<dbReference type="PANTHER" id="PTHR31857:SF2">
    <property type="entry name" value="HSSA_B-LIKE PROTEIN 17-RELATED"/>
    <property type="match status" value="1"/>
</dbReference>
<dbReference type="Pfam" id="PF05710">
    <property type="entry name" value="Coiled"/>
    <property type="match status" value="1"/>
</dbReference>
<accession>Q86HG3</accession>
<accession>Q55AM2</accession>
<gene>
    <name type="primary">hssl10</name>
    <name type="ORF">DDB_G0271712</name>
</gene>
<feature type="chain" id="PRO_0000330380" description="HssA/B-like protein 10">
    <location>
        <begin position="1"/>
        <end position="89"/>
    </location>
</feature>
<organism>
    <name type="scientific">Dictyostelium discoideum</name>
    <name type="common">Social amoeba</name>
    <dbReference type="NCBI Taxonomy" id="44689"/>
    <lineage>
        <taxon>Eukaryota</taxon>
        <taxon>Amoebozoa</taxon>
        <taxon>Evosea</taxon>
        <taxon>Eumycetozoa</taxon>
        <taxon>Dictyostelia</taxon>
        <taxon>Dictyosteliales</taxon>
        <taxon>Dictyosteliaceae</taxon>
        <taxon>Dictyostelium</taxon>
    </lineage>
</organism>
<evidence type="ECO:0000305" key="1"/>
<proteinExistence type="inferred from homology"/>